<accession>Q556J4</accession>
<accession>Q86K08</accession>
<keyword id="KW-1015">Disulfide bond</keyword>
<keyword id="KW-0325">Glycoprotein</keyword>
<keyword id="KW-0472">Membrane</keyword>
<keyword id="KW-0675">Receptor</keyword>
<keyword id="KW-1185">Reference proteome</keyword>
<keyword id="KW-0732">Signal</keyword>
<keyword id="KW-0812">Transmembrane</keyword>
<keyword id="KW-1133">Transmembrane helix</keyword>
<comment type="subcellular location">
    <subcellularLocation>
        <location evidence="5">Membrane</location>
        <topology evidence="5">Multi-pass membrane protein</topology>
    </subcellularLocation>
</comment>
<comment type="domain">
    <text evidence="1">Lys-Thr-X-X-X-Trp motif interacts with the PDZ domain of Dvl (Disheveled) family members and is involved in the activation of the Wnt/beta-catenin signaling pathway.</text>
</comment>
<comment type="similarity">
    <text evidence="5">Belongs to the G-protein coupled receptor Fz/Smo family.</text>
</comment>
<comment type="caution">
    <text evidence="5">The gene for this protein is duplicated in strains AX3 and AX4. These strains contain a duplication of a segment of 750 kb of chromosome 2 compared to the corresponding sequence in strain AX2.</text>
</comment>
<dbReference type="EMBL" id="AAFI02000011">
    <property type="protein sequence ID" value="EAL70439.1"/>
    <property type="molecule type" value="Genomic_DNA"/>
</dbReference>
<dbReference type="EMBL" id="AAFI02000009">
    <property type="protein sequence ID" value="EAL71080.1"/>
    <property type="molecule type" value="Genomic_DNA"/>
</dbReference>
<dbReference type="RefSeq" id="XP_644364.1">
    <property type="nucleotide sequence ID" value="XM_639272.1"/>
</dbReference>
<dbReference type="RefSeq" id="XP_645050.1">
    <property type="nucleotide sequence ID" value="XM_639958.1"/>
</dbReference>
<dbReference type="FunCoup" id="Q556J4">
    <property type="interactions" value="20"/>
</dbReference>
<dbReference type="STRING" id="44689.Q556J4"/>
<dbReference type="GlyCosmos" id="Q556J4">
    <property type="glycosylation" value="7 sites, No reported glycans"/>
</dbReference>
<dbReference type="GlyGen" id="Q556J4">
    <property type="glycosylation" value="7 sites"/>
</dbReference>
<dbReference type="PaxDb" id="44689-DDB0229858"/>
<dbReference type="EnsemblProtists" id="EAL70439">
    <property type="protein sequence ID" value="EAL70439"/>
    <property type="gene ID" value="DDB_G0274011"/>
</dbReference>
<dbReference type="EnsemblProtists" id="EAL71080">
    <property type="protein sequence ID" value="EAL71080"/>
    <property type="gene ID" value="DDB_G0272885"/>
</dbReference>
<dbReference type="GeneID" id="8618726"/>
<dbReference type="GeneID" id="8619250"/>
<dbReference type="KEGG" id="ddi:DDB_G0272885"/>
<dbReference type="KEGG" id="ddi:DDB_G0274011"/>
<dbReference type="dictyBase" id="DDB_G0272885">
    <property type="gene designation" value="fslJ-1"/>
</dbReference>
<dbReference type="dictyBase" id="DDB_G0274011">
    <property type="gene designation" value="fslJ-2"/>
</dbReference>
<dbReference type="VEuPathDB" id="AmoebaDB:DDB_G0274011"/>
<dbReference type="eggNOG" id="ENOG502RD8Q">
    <property type="taxonomic scope" value="Eukaryota"/>
</dbReference>
<dbReference type="HOGENOM" id="CLU_030318_0_0_1"/>
<dbReference type="InParanoid" id="Q556J4"/>
<dbReference type="OMA" id="IAWIPPI"/>
<dbReference type="PhylomeDB" id="Q556J4"/>
<dbReference type="PRO" id="PR:Q556J4"/>
<dbReference type="Proteomes" id="UP000002195">
    <property type="component" value="Chromosome 2"/>
</dbReference>
<dbReference type="GO" id="GO:0016020">
    <property type="term" value="C:membrane"/>
    <property type="evidence" value="ECO:0007669"/>
    <property type="project" value="UniProtKB-SubCell"/>
</dbReference>
<dbReference type="GO" id="GO:0004888">
    <property type="term" value="F:transmembrane signaling receptor activity"/>
    <property type="evidence" value="ECO:0007669"/>
    <property type="project" value="InterPro"/>
</dbReference>
<dbReference type="GO" id="GO:0007166">
    <property type="term" value="P:cell surface receptor signaling pathway"/>
    <property type="evidence" value="ECO:0007669"/>
    <property type="project" value="InterPro"/>
</dbReference>
<dbReference type="Gene3D" id="1.10.2000.10">
    <property type="entry name" value="Frizzled cysteine-rich domain"/>
    <property type="match status" value="1"/>
</dbReference>
<dbReference type="Gene3D" id="1.20.1070.10">
    <property type="entry name" value="Rhodopsin 7-helix transmembrane proteins"/>
    <property type="match status" value="1"/>
</dbReference>
<dbReference type="InterPro" id="IPR020067">
    <property type="entry name" value="Frizzled_dom"/>
</dbReference>
<dbReference type="InterPro" id="IPR036790">
    <property type="entry name" value="Frizzled_dom_sf"/>
</dbReference>
<dbReference type="InterPro" id="IPR017981">
    <property type="entry name" value="GPCR_2-like_7TM"/>
</dbReference>
<dbReference type="InterPro" id="IPR050949">
    <property type="entry name" value="GPCR_Fz/Smo-like"/>
</dbReference>
<dbReference type="PANTHER" id="PTHR31787:SF13">
    <property type="entry name" value="FRIZZLED AND SMOOTHENED-LIKE PROTEIN J"/>
    <property type="match status" value="1"/>
</dbReference>
<dbReference type="PANTHER" id="PTHR31787">
    <property type="entry name" value="G-PROTEIN-COUPLED RECEPTOR GPCR FAMILY PROTEIN"/>
    <property type="match status" value="1"/>
</dbReference>
<dbReference type="PROSITE" id="PS50038">
    <property type="entry name" value="FZ"/>
    <property type="match status" value="1"/>
</dbReference>
<dbReference type="PROSITE" id="PS50261">
    <property type="entry name" value="G_PROTEIN_RECEP_F2_4"/>
    <property type="match status" value="1"/>
</dbReference>
<name>FSLJ_DICDI</name>
<gene>
    <name type="primary">fslJ-1</name>
    <name type="synonym">cnrA</name>
    <name type="ORF">DDB_G0272885</name>
</gene>
<gene>
    <name type="primary">fslJ-2</name>
    <name type="ORF">DDB_G0274011</name>
</gene>
<sequence>MVSNKNLLPIIYIFFIILYFGDVAKSQYFPLDKGATCQKYRGDSPGIQLCDGFLSNPNSIYINSTSSQEAIQAQGNLVRQYINFYKSFESCKNPRTFALLCAFLFPECEKYTDPVSKVTYAYPILPCYNNCLNMTTSCQISTSRLSCATKYTFENISYSVFPKNTTTYQIDSLSYTNTCENTDLIANSQNTSIQQCFEPLVYHVSTDEIHDKSIGYIFPSTNTTCVVGCPAPLYYANQWRNIYRLSDVLSILSCILTLFLVITLGIINPKVSRFDKINVMLLSSIFLQAFSGALMTFNGTENTLCPEDGRFASYIDRMCVATGFLLHGSSLLVVQWWCVLSFEVWFTIFQVGKKQKDRFIYYLVASLIIAWIPPIVSISKNEYSGGPANPFCWLTTFNYRRFAFWLPMGIFLCLGGVFLILLMREIYVIVSGNVQSTKESRFKVLKMEAKPIISLIMYFSCLLYLFIYDQWINNHMHVYTDSIPSYALCLLTSTSTNDCLLKAPDITGLGYFIYSIRVFGVYAFIIYGISKKTLQIWKYNYFVVFIGQKIEQFTNATTTAKSSNSNNSSTTNNISVKASSNMEYETRQENENGDSQSVELDSNSDAL</sequence>
<feature type="signal peptide" evidence="2">
    <location>
        <begin position="1"/>
        <end position="26"/>
    </location>
</feature>
<feature type="chain" id="PRO_0000371371" description="Frizzled and smoothened-like protein J">
    <location>
        <begin position="27"/>
        <end position="607"/>
    </location>
</feature>
<feature type="topological domain" description="Extracellular" evidence="2">
    <location>
        <begin position="27"/>
        <end position="247"/>
    </location>
</feature>
<feature type="transmembrane region" description="Helical; Name=1" evidence="2">
    <location>
        <begin position="248"/>
        <end position="268"/>
    </location>
</feature>
<feature type="topological domain" description="Cytoplasmic" evidence="2">
    <location>
        <begin position="269"/>
        <end position="276"/>
    </location>
</feature>
<feature type="transmembrane region" description="Helical; Name=2" evidence="2">
    <location>
        <begin position="277"/>
        <end position="297"/>
    </location>
</feature>
<feature type="topological domain" description="Extracellular" evidence="2">
    <location>
        <begin position="298"/>
        <end position="330"/>
    </location>
</feature>
<feature type="transmembrane region" description="Helical; Name=3" evidence="2">
    <location>
        <begin position="331"/>
        <end position="351"/>
    </location>
</feature>
<feature type="topological domain" description="Cytoplasmic" evidence="2">
    <location>
        <begin position="352"/>
        <end position="358"/>
    </location>
</feature>
<feature type="transmembrane region" description="Helical; Name=4" evidence="2">
    <location>
        <begin position="359"/>
        <end position="379"/>
    </location>
</feature>
<feature type="topological domain" description="Extracellular" evidence="2">
    <location>
        <begin position="380"/>
        <end position="401"/>
    </location>
</feature>
<feature type="transmembrane region" description="Helical; Name=5" evidence="2">
    <location>
        <begin position="402"/>
        <end position="422"/>
    </location>
</feature>
<feature type="topological domain" description="Cytoplasmic" evidence="2">
    <location>
        <begin position="423"/>
        <end position="451"/>
    </location>
</feature>
<feature type="transmembrane region" description="Helical; Name=6" evidence="2">
    <location>
        <begin position="452"/>
        <end position="472"/>
    </location>
</feature>
<feature type="topological domain" description="Extracellular" evidence="2">
    <location>
        <begin position="473"/>
        <end position="508"/>
    </location>
</feature>
<feature type="transmembrane region" description="Helical; Name=7" evidence="2">
    <location>
        <begin position="509"/>
        <end position="529"/>
    </location>
</feature>
<feature type="topological domain" description="Cytoplasmic" evidence="2">
    <location>
        <begin position="530"/>
        <end position="607"/>
    </location>
</feature>
<feature type="domain" description="FZ" evidence="3">
    <location>
        <begin position="32"/>
        <end position="182"/>
    </location>
</feature>
<feature type="region of interest" description="Disordered" evidence="4">
    <location>
        <begin position="559"/>
        <end position="607"/>
    </location>
</feature>
<feature type="short sequence motif" description="Lys-Thr-X-X-X-Trp motif, mediates interaction with the PDZ domain of Dvl family members" evidence="1">
    <location>
        <begin position="532"/>
        <end position="537"/>
    </location>
</feature>
<feature type="compositionally biased region" description="Low complexity" evidence="4">
    <location>
        <begin position="559"/>
        <end position="575"/>
    </location>
</feature>
<feature type="compositionally biased region" description="Polar residues" evidence="4">
    <location>
        <begin position="593"/>
        <end position="607"/>
    </location>
</feature>
<feature type="glycosylation site" description="N-linked (GlcNAc...) asparagine" evidence="2">
    <location>
        <position position="63"/>
    </location>
</feature>
<feature type="glycosylation site" description="N-linked (GlcNAc...) asparagine" evidence="2">
    <location>
        <position position="133"/>
    </location>
</feature>
<feature type="glycosylation site" description="N-linked (GlcNAc...) asparagine" evidence="2">
    <location>
        <position position="155"/>
    </location>
</feature>
<feature type="glycosylation site" description="N-linked (GlcNAc...) asparagine" evidence="2">
    <location>
        <position position="164"/>
    </location>
</feature>
<feature type="glycosylation site" description="N-linked (GlcNAc...) asparagine" evidence="2">
    <location>
        <position position="190"/>
    </location>
</feature>
<feature type="glycosylation site" description="N-linked (GlcNAc...) asparagine" evidence="2">
    <location>
        <position position="222"/>
    </location>
</feature>
<feature type="glycosylation site" description="N-linked (GlcNAc...) asparagine" evidence="2">
    <location>
        <position position="298"/>
    </location>
</feature>
<feature type="disulfide bond" evidence="3">
    <location>
        <begin position="37"/>
        <end position="108"/>
    </location>
</feature>
<feature type="disulfide bond" evidence="3">
    <location>
        <begin position="50"/>
        <end position="101"/>
    </location>
</feature>
<feature type="disulfide bond" evidence="3">
    <location>
        <begin position="127"/>
        <end position="179"/>
    </location>
</feature>
<proteinExistence type="inferred from homology"/>
<reference key="1">
    <citation type="journal article" date="2002" name="Nature">
        <title>Sequence and analysis of chromosome 2 of Dictyostelium discoideum.</title>
        <authorList>
            <person name="Gloeckner G."/>
            <person name="Eichinger L."/>
            <person name="Szafranski K."/>
            <person name="Pachebat J.A."/>
            <person name="Bankier A.T."/>
            <person name="Dear P.H."/>
            <person name="Lehmann R."/>
            <person name="Baumgart C."/>
            <person name="Parra G."/>
            <person name="Abril J.F."/>
            <person name="Guigo R."/>
            <person name="Kumpf K."/>
            <person name="Tunggal B."/>
            <person name="Cox E.C."/>
            <person name="Quail M.A."/>
            <person name="Platzer M."/>
            <person name="Rosenthal A."/>
            <person name="Noegel A.A."/>
        </authorList>
    </citation>
    <scope>NUCLEOTIDE SEQUENCE [LARGE SCALE GENOMIC DNA]</scope>
    <source>
        <strain>AX4</strain>
    </source>
</reference>
<reference key="2">
    <citation type="journal article" date="2005" name="Nature">
        <title>The genome of the social amoeba Dictyostelium discoideum.</title>
        <authorList>
            <person name="Eichinger L."/>
            <person name="Pachebat J.A."/>
            <person name="Gloeckner G."/>
            <person name="Rajandream M.A."/>
            <person name="Sucgang R."/>
            <person name="Berriman M."/>
            <person name="Song J."/>
            <person name="Olsen R."/>
            <person name="Szafranski K."/>
            <person name="Xu Q."/>
            <person name="Tunggal B."/>
            <person name="Kummerfeld S."/>
            <person name="Madera M."/>
            <person name="Konfortov B.A."/>
            <person name="Rivero F."/>
            <person name="Bankier A.T."/>
            <person name="Lehmann R."/>
            <person name="Hamlin N."/>
            <person name="Davies R."/>
            <person name="Gaudet P."/>
            <person name="Fey P."/>
            <person name="Pilcher K."/>
            <person name="Chen G."/>
            <person name="Saunders D."/>
            <person name="Sodergren E.J."/>
            <person name="Davis P."/>
            <person name="Kerhornou A."/>
            <person name="Nie X."/>
            <person name="Hall N."/>
            <person name="Anjard C."/>
            <person name="Hemphill L."/>
            <person name="Bason N."/>
            <person name="Farbrother P."/>
            <person name="Desany B."/>
            <person name="Just E."/>
            <person name="Morio T."/>
            <person name="Rost R."/>
            <person name="Churcher C.M."/>
            <person name="Cooper J."/>
            <person name="Haydock S."/>
            <person name="van Driessche N."/>
            <person name="Cronin A."/>
            <person name="Goodhead I."/>
            <person name="Muzny D.M."/>
            <person name="Mourier T."/>
            <person name="Pain A."/>
            <person name="Lu M."/>
            <person name="Harper D."/>
            <person name="Lindsay R."/>
            <person name="Hauser H."/>
            <person name="James K.D."/>
            <person name="Quiles M."/>
            <person name="Madan Babu M."/>
            <person name="Saito T."/>
            <person name="Buchrieser C."/>
            <person name="Wardroper A."/>
            <person name="Felder M."/>
            <person name="Thangavelu M."/>
            <person name="Johnson D."/>
            <person name="Knights A."/>
            <person name="Loulseged H."/>
            <person name="Mungall K.L."/>
            <person name="Oliver K."/>
            <person name="Price C."/>
            <person name="Quail M.A."/>
            <person name="Urushihara H."/>
            <person name="Hernandez J."/>
            <person name="Rabbinowitsch E."/>
            <person name="Steffen D."/>
            <person name="Sanders M."/>
            <person name="Ma J."/>
            <person name="Kohara Y."/>
            <person name="Sharp S."/>
            <person name="Simmonds M.N."/>
            <person name="Spiegler S."/>
            <person name="Tivey A."/>
            <person name="Sugano S."/>
            <person name="White B."/>
            <person name="Walker D."/>
            <person name="Woodward J.R."/>
            <person name="Winckler T."/>
            <person name="Tanaka Y."/>
            <person name="Shaulsky G."/>
            <person name="Schleicher M."/>
            <person name="Weinstock G.M."/>
            <person name="Rosenthal A."/>
            <person name="Cox E.C."/>
            <person name="Chisholm R.L."/>
            <person name="Gibbs R.A."/>
            <person name="Loomis W.F."/>
            <person name="Platzer M."/>
            <person name="Kay R.R."/>
            <person name="Williams J.G."/>
            <person name="Dear P.H."/>
            <person name="Noegel A.A."/>
            <person name="Barrell B.G."/>
            <person name="Kuspa A."/>
        </authorList>
    </citation>
    <scope>NUCLEOTIDE SEQUENCE [LARGE SCALE GENOMIC DNA]</scope>
    <source>
        <strain>AX4</strain>
    </source>
</reference>
<reference key="3">
    <citation type="journal article" date="2006" name="Eur. J. Cell Biol.">
        <title>The Dictyostelium repertoire of seven transmembrane domain receptors.</title>
        <authorList>
            <person name="Prabhu Y."/>
            <person name="Eichinger L."/>
        </authorList>
    </citation>
    <scope>NOMENCLATURE</scope>
</reference>
<protein>
    <recommendedName>
        <fullName>Frizzled and smoothened-like protein J</fullName>
    </recommendedName>
    <alternativeName>
        <fullName>Cell number regulator protein A</fullName>
    </alternativeName>
</protein>
<evidence type="ECO:0000250" key="1"/>
<evidence type="ECO:0000255" key="2"/>
<evidence type="ECO:0000255" key="3">
    <source>
        <dbReference type="PROSITE-ProRule" id="PRU00090"/>
    </source>
</evidence>
<evidence type="ECO:0000256" key="4">
    <source>
        <dbReference type="SAM" id="MobiDB-lite"/>
    </source>
</evidence>
<evidence type="ECO:0000305" key="5"/>
<organism>
    <name type="scientific">Dictyostelium discoideum</name>
    <name type="common">Social amoeba</name>
    <dbReference type="NCBI Taxonomy" id="44689"/>
    <lineage>
        <taxon>Eukaryota</taxon>
        <taxon>Amoebozoa</taxon>
        <taxon>Evosea</taxon>
        <taxon>Eumycetozoa</taxon>
        <taxon>Dictyostelia</taxon>
        <taxon>Dictyosteliales</taxon>
        <taxon>Dictyosteliaceae</taxon>
        <taxon>Dictyostelium</taxon>
    </lineage>
</organism>